<reference key="1">
    <citation type="journal article" date="2003" name="Nature">
        <title>The genome of a motile marine Synechococcus.</title>
        <authorList>
            <person name="Palenik B."/>
            <person name="Brahamsha B."/>
            <person name="Larimer F.W."/>
            <person name="Land M.L."/>
            <person name="Hauser L."/>
            <person name="Chain P."/>
            <person name="Lamerdin J.E."/>
            <person name="Regala W."/>
            <person name="Allen E.E."/>
            <person name="McCarren J."/>
            <person name="Paulsen I.T."/>
            <person name="Dufresne A."/>
            <person name="Partensky F."/>
            <person name="Webb E.A."/>
            <person name="Waterbury J."/>
        </authorList>
    </citation>
    <scope>NUCLEOTIDE SEQUENCE [LARGE SCALE GENOMIC DNA]</scope>
    <source>
        <strain>WH8102</strain>
    </source>
</reference>
<evidence type="ECO:0000255" key="1">
    <source>
        <dbReference type="HAMAP-Rule" id="MF_00184"/>
    </source>
</evidence>
<evidence type="ECO:0000256" key="2">
    <source>
        <dbReference type="SAM" id="MobiDB-lite"/>
    </source>
</evidence>
<organism>
    <name type="scientific">Parasynechococcus marenigrum (strain WH8102)</name>
    <dbReference type="NCBI Taxonomy" id="84588"/>
    <lineage>
        <taxon>Bacteria</taxon>
        <taxon>Bacillati</taxon>
        <taxon>Cyanobacteriota</taxon>
        <taxon>Cyanophyceae</taxon>
        <taxon>Synechococcales</taxon>
        <taxon>Prochlorococcaceae</taxon>
        <taxon>Parasynechococcus</taxon>
        <taxon>Parasynechococcus marenigrum</taxon>
    </lineage>
</organism>
<keyword id="KW-0030">Aminoacyl-tRNA synthetase</keyword>
<keyword id="KW-0067">ATP-binding</keyword>
<keyword id="KW-0963">Cytoplasm</keyword>
<keyword id="KW-0436">Ligase</keyword>
<keyword id="KW-0479">Metal-binding</keyword>
<keyword id="KW-0547">Nucleotide-binding</keyword>
<keyword id="KW-0648">Protein biosynthesis</keyword>
<keyword id="KW-0694">RNA-binding</keyword>
<keyword id="KW-0820">tRNA-binding</keyword>
<keyword id="KW-0862">Zinc</keyword>
<sequence>MAGPDRKPVSSAAATTPAPSAPVVLPKTSESSQLLKIRHSMSHVMAMAVQQLFPKARVTIGPWTESGFYYDFDNPDPFTEADLKAIKKGMIKIINKKVPLERVEVTRAEAETKIKAQNEPYKLEILEGLQDPITLYTLGEDWWDLCAGPHVEHTGQLNAKAFELESVAGAYWRGDETKAQLHRIYGTAWETPEQLAEHKRRKEEALRRDHRRIGKDLDLFSIEDEAGAGLVFWHPRGARMRLLIEEFWRQAHFEGGYELLYTPHVADISLWKTSGHLDFYAESMFGPMEVDEREYQLKPMNCPFHVLTYASKLRSYRELPIRWAELGTVYRYERPGVMHGLMRVRGFTQDDAHVFCLPEQISDEILKILDLTERILSTFDFNTYEINLSTRPEKSIGDDAVWDLATKGLIEALERKGWKYKIDEGGGAFYGPKIDLKIEDAIGRMWQCSTIQLDFNLPERFKLDYVAADGSKQRPIMIHRAIFGSLERFFGIMTENYAGDYPFWLAPEQVRLLPVTDEVQPYAESLLDQLTQAGVRATIDRSGDRLGKLIRTGEQMKIPVLAVIGAKEAEQNAVSLRSRRDGDLGVAAVADLLRAAESANSQRAAGLGLNG</sequence>
<dbReference type="EC" id="6.1.1.3" evidence="1"/>
<dbReference type="EMBL" id="BX569693">
    <property type="protein sequence ID" value="CAE07993.1"/>
    <property type="molecule type" value="Genomic_DNA"/>
</dbReference>
<dbReference type="RefSeq" id="WP_011128342.1">
    <property type="nucleotide sequence ID" value="NC_005070.1"/>
</dbReference>
<dbReference type="SMR" id="Q7U662"/>
<dbReference type="STRING" id="84588.SYNW1478"/>
<dbReference type="KEGG" id="syw:SYNW1478"/>
<dbReference type="eggNOG" id="COG0441">
    <property type="taxonomic scope" value="Bacteria"/>
</dbReference>
<dbReference type="HOGENOM" id="CLU_008554_0_1_3"/>
<dbReference type="Proteomes" id="UP000001422">
    <property type="component" value="Chromosome"/>
</dbReference>
<dbReference type="GO" id="GO:0005737">
    <property type="term" value="C:cytoplasm"/>
    <property type="evidence" value="ECO:0007669"/>
    <property type="project" value="UniProtKB-SubCell"/>
</dbReference>
<dbReference type="GO" id="GO:0005524">
    <property type="term" value="F:ATP binding"/>
    <property type="evidence" value="ECO:0007669"/>
    <property type="project" value="UniProtKB-UniRule"/>
</dbReference>
<dbReference type="GO" id="GO:0046872">
    <property type="term" value="F:metal ion binding"/>
    <property type="evidence" value="ECO:0007669"/>
    <property type="project" value="UniProtKB-KW"/>
</dbReference>
<dbReference type="GO" id="GO:0004829">
    <property type="term" value="F:threonine-tRNA ligase activity"/>
    <property type="evidence" value="ECO:0007669"/>
    <property type="project" value="UniProtKB-UniRule"/>
</dbReference>
<dbReference type="GO" id="GO:0000049">
    <property type="term" value="F:tRNA binding"/>
    <property type="evidence" value="ECO:0007669"/>
    <property type="project" value="UniProtKB-KW"/>
</dbReference>
<dbReference type="GO" id="GO:0006435">
    <property type="term" value="P:threonyl-tRNA aminoacylation"/>
    <property type="evidence" value="ECO:0007669"/>
    <property type="project" value="UniProtKB-UniRule"/>
</dbReference>
<dbReference type="CDD" id="cd00860">
    <property type="entry name" value="ThrRS_anticodon"/>
    <property type="match status" value="1"/>
</dbReference>
<dbReference type="CDD" id="cd00771">
    <property type="entry name" value="ThrRS_core"/>
    <property type="match status" value="1"/>
</dbReference>
<dbReference type="FunFam" id="3.30.54.20:FF:000002">
    <property type="entry name" value="Threonine--tRNA ligase"/>
    <property type="match status" value="1"/>
</dbReference>
<dbReference type="FunFam" id="3.30.930.10:FF:000002">
    <property type="entry name" value="Threonine--tRNA ligase"/>
    <property type="match status" value="1"/>
</dbReference>
<dbReference type="FunFam" id="3.40.50.800:FF:000001">
    <property type="entry name" value="Threonine--tRNA ligase"/>
    <property type="match status" value="1"/>
</dbReference>
<dbReference type="Gene3D" id="3.30.54.20">
    <property type="match status" value="1"/>
</dbReference>
<dbReference type="Gene3D" id="3.40.50.800">
    <property type="entry name" value="Anticodon-binding domain"/>
    <property type="match status" value="1"/>
</dbReference>
<dbReference type="Gene3D" id="3.30.930.10">
    <property type="entry name" value="Bira Bifunctional Protein, Domain 2"/>
    <property type="match status" value="1"/>
</dbReference>
<dbReference type="Gene3D" id="3.30.980.10">
    <property type="entry name" value="Threonyl-trna Synthetase, Chain A, domain 2"/>
    <property type="match status" value="1"/>
</dbReference>
<dbReference type="HAMAP" id="MF_00184">
    <property type="entry name" value="Thr_tRNA_synth"/>
    <property type="match status" value="1"/>
</dbReference>
<dbReference type="InterPro" id="IPR002314">
    <property type="entry name" value="aa-tRNA-synt_IIb"/>
</dbReference>
<dbReference type="InterPro" id="IPR006195">
    <property type="entry name" value="aa-tRNA-synth_II"/>
</dbReference>
<dbReference type="InterPro" id="IPR045864">
    <property type="entry name" value="aa-tRNA-synth_II/BPL/LPL"/>
</dbReference>
<dbReference type="InterPro" id="IPR004154">
    <property type="entry name" value="Anticodon-bd"/>
</dbReference>
<dbReference type="InterPro" id="IPR036621">
    <property type="entry name" value="Anticodon-bd_dom_sf"/>
</dbReference>
<dbReference type="InterPro" id="IPR002320">
    <property type="entry name" value="Thr-tRNA-ligase_IIa"/>
</dbReference>
<dbReference type="InterPro" id="IPR018163">
    <property type="entry name" value="Thr/Ala-tRNA-synth_IIc_edit"/>
</dbReference>
<dbReference type="InterPro" id="IPR047246">
    <property type="entry name" value="ThrRS_anticodon"/>
</dbReference>
<dbReference type="InterPro" id="IPR033728">
    <property type="entry name" value="ThrRS_core"/>
</dbReference>
<dbReference type="InterPro" id="IPR012947">
    <property type="entry name" value="tRNA_SAD"/>
</dbReference>
<dbReference type="NCBIfam" id="TIGR00418">
    <property type="entry name" value="thrS"/>
    <property type="match status" value="1"/>
</dbReference>
<dbReference type="PANTHER" id="PTHR11451:SF44">
    <property type="entry name" value="THREONINE--TRNA LIGASE, CHLOROPLASTIC_MITOCHONDRIAL 2"/>
    <property type="match status" value="1"/>
</dbReference>
<dbReference type="PANTHER" id="PTHR11451">
    <property type="entry name" value="THREONINE-TRNA LIGASE"/>
    <property type="match status" value="1"/>
</dbReference>
<dbReference type="Pfam" id="PF03129">
    <property type="entry name" value="HGTP_anticodon"/>
    <property type="match status" value="1"/>
</dbReference>
<dbReference type="Pfam" id="PF00587">
    <property type="entry name" value="tRNA-synt_2b"/>
    <property type="match status" value="1"/>
</dbReference>
<dbReference type="Pfam" id="PF07973">
    <property type="entry name" value="tRNA_SAD"/>
    <property type="match status" value="1"/>
</dbReference>
<dbReference type="PRINTS" id="PR01047">
    <property type="entry name" value="TRNASYNTHTHR"/>
</dbReference>
<dbReference type="SMART" id="SM00863">
    <property type="entry name" value="tRNA_SAD"/>
    <property type="match status" value="1"/>
</dbReference>
<dbReference type="SUPFAM" id="SSF52954">
    <property type="entry name" value="Class II aaRS ABD-related"/>
    <property type="match status" value="1"/>
</dbReference>
<dbReference type="SUPFAM" id="SSF55681">
    <property type="entry name" value="Class II aaRS and biotin synthetases"/>
    <property type="match status" value="1"/>
</dbReference>
<dbReference type="SUPFAM" id="SSF55186">
    <property type="entry name" value="ThrRS/AlaRS common domain"/>
    <property type="match status" value="1"/>
</dbReference>
<dbReference type="PROSITE" id="PS50862">
    <property type="entry name" value="AA_TRNA_LIGASE_II"/>
    <property type="match status" value="1"/>
</dbReference>
<gene>
    <name evidence="1" type="primary">thrS</name>
    <name type="ordered locus">SYNW1478</name>
</gene>
<protein>
    <recommendedName>
        <fullName evidence="1">Threonine--tRNA ligase</fullName>
        <ecNumber evidence="1">6.1.1.3</ecNumber>
    </recommendedName>
    <alternativeName>
        <fullName evidence="1">Threonyl-tRNA synthetase</fullName>
        <shortName evidence="1">ThrRS</shortName>
    </alternativeName>
</protein>
<accession>Q7U662</accession>
<name>SYT_PARMW</name>
<proteinExistence type="inferred from homology"/>
<comment type="function">
    <text evidence="1">Catalyzes the attachment of threonine to tRNA(Thr) in a two-step reaction: L-threonine is first activated by ATP to form Thr-AMP and then transferred to the acceptor end of tRNA(Thr). Also edits incorrectly charged L-seryl-tRNA(Thr).</text>
</comment>
<comment type="catalytic activity">
    <reaction evidence="1">
        <text>tRNA(Thr) + L-threonine + ATP = L-threonyl-tRNA(Thr) + AMP + diphosphate + H(+)</text>
        <dbReference type="Rhea" id="RHEA:24624"/>
        <dbReference type="Rhea" id="RHEA-COMP:9670"/>
        <dbReference type="Rhea" id="RHEA-COMP:9704"/>
        <dbReference type="ChEBI" id="CHEBI:15378"/>
        <dbReference type="ChEBI" id="CHEBI:30616"/>
        <dbReference type="ChEBI" id="CHEBI:33019"/>
        <dbReference type="ChEBI" id="CHEBI:57926"/>
        <dbReference type="ChEBI" id="CHEBI:78442"/>
        <dbReference type="ChEBI" id="CHEBI:78534"/>
        <dbReference type="ChEBI" id="CHEBI:456215"/>
        <dbReference type="EC" id="6.1.1.3"/>
    </reaction>
</comment>
<comment type="cofactor">
    <cofactor evidence="1">
        <name>Zn(2+)</name>
        <dbReference type="ChEBI" id="CHEBI:29105"/>
    </cofactor>
    <text evidence="1">Binds 1 zinc ion per subunit.</text>
</comment>
<comment type="subunit">
    <text evidence="1">Homodimer.</text>
</comment>
<comment type="subcellular location">
    <subcellularLocation>
        <location evidence="1">Cytoplasm</location>
    </subcellularLocation>
</comment>
<comment type="similarity">
    <text evidence="1">Belongs to the class-II aminoacyl-tRNA synthetase family.</text>
</comment>
<feature type="chain" id="PRO_0000101071" description="Threonine--tRNA ligase">
    <location>
        <begin position="1"/>
        <end position="611"/>
    </location>
</feature>
<feature type="region of interest" description="Disordered" evidence="2">
    <location>
        <begin position="1"/>
        <end position="25"/>
    </location>
</feature>
<feature type="region of interest" description="Catalytic" evidence="1">
    <location>
        <begin position="209"/>
        <end position="502"/>
    </location>
</feature>
<feature type="compositionally biased region" description="Low complexity" evidence="2">
    <location>
        <begin position="9"/>
        <end position="24"/>
    </location>
</feature>
<feature type="binding site" evidence="1">
    <location>
        <position position="302"/>
    </location>
    <ligand>
        <name>Zn(2+)</name>
        <dbReference type="ChEBI" id="CHEBI:29105"/>
    </ligand>
</feature>
<feature type="binding site" evidence="1">
    <location>
        <position position="353"/>
    </location>
    <ligand>
        <name>Zn(2+)</name>
        <dbReference type="ChEBI" id="CHEBI:29105"/>
    </ligand>
</feature>
<feature type="binding site" evidence="1">
    <location>
        <position position="479"/>
    </location>
    <ligand>
        <name>Zn(2+)</name>
        <dbReference type="ChEBI" id="CHEBI:29105"/>
    </ligand>
</feature>